<dbReference type="EMBL" id="CR931997">
    <property type="protein sequence ID" value="CAI38009.1"/>
    <property type="molecule type" value="Genomic_DNA"/>
</dbReference>
<dbReference type="RefSeq" id="WP_011274166.1">
    <property type="nucleotide sequence ID" value="NC_007164.1"/>
</dbReference>
<dbReference type="SMR" id="Q4JT48"/>
<dbReference type="STRING" id="306537.jk1832"/>
<dbReference type="KEGG" id="cjk:jk1832"/>
<dbReference type="PATRIC" id="fig|306537.10.peg.1855"/>
<dbReference type="eggNOG" id="COG0088">
    <property type="taxonomic scope" value="Bacteria"/>
</dbReference>
<dbReference type="HOGENOM" id="CLU_041575_5_0_11"/>
<dbReference type="OrthoDB" id="9803201at2"/>
<dbReference type="Proteomes" id="UP000000545">
    <property type="component" value="Chromosome"/>
</dbReference>
<dbReference type="GO" id="GO:1990904">
    <property type="term" value="C:ribonucleoprotein complex"/>
    <property type="evidence" value="ECO:0007669"/>
    <property type="project" value="UniProtKB-KW"/>
</dbReference>
<dbReference type="GO" id="GO:0005840">
    <property type="term" value="C:ribosome"/>
    <property type="evidence" value="ECO:0007669"/>
    <property type="project" value="UniProtKB-KW"/>
</dbReference>
<dbReference type="GO" id="GO:0019843">
    <property type="term" value="F:rRNA binding"/>
    <property type="evidence" value="ECO:0007669"/>
    <property type="project" value="UniProtKB-UniRule"/>
</dbReference>
<dbReference type="GO" id="GO:0003735">
    <property type="term" value="F:structural constituent of ribosome"/>
    <property type="evidence" value="ECO:0007669"/>
    <property type="project" value="InterPro"/>
</dbReference>
<dbReference type="GO" id="GO:0006412">
    <property type="term" value="P:translation"/>
    <property type="evidence" value="ECO:0007669"/>
    <property type="project" value="UniProtKB-UniRule"/>
</dbReference>
<dbReference type="FunFam" id="3.40.1370.10:FF:000004">
    <property type="entry name" value="50S ribosomal protein L4"/>
    <property type="match status" value="1"/>
</dbReference>
<dbReference type="Gene3D" id="3.40.1370.10">
    <property type="match status" value="1"/>
</dbReference>
<dbReference type="HAMAP" id="MF_01328_B">
    <property type="entry name" value="Ribosomal_uL4_B"/>
    <property type="match status" value="1"/>
</dbReference>
<dbReference type="InterPro" id="IPR002136">
    <property type="entry name" value="Ribosomal_uL4"/>
</dbReference>
<dbReference type="InterPro" id="IPR013005">
    <property type="entry name" value="Ribosomal_uL4-like"/>
</dbReference>
<dbReference type="InterPro" id="IPR023574">
    <property type="entry name" value="Ribosomal_uL4_dom_sf"/>
</dbReference>
<dbReference type="NCBIfam" id="TIGR03953">
    <property type="entry name" value="rplD_bact"/>
    <property type="match status" value="1"/>
</dbReference>
<dbReference type="PANTHER" id="PTHR10746">
    <property type="entry name" value="50S RIBOSOMAL PROTEIN L4"/>
    <property type="match status" value="1"/>
</dbReference>
<dbReference type="PANTHER" id="PTHR10746:SF6">
    <property type="entry name" value="LARGE RIBOSOMAL SUBUNIT PROTEIN UL4M"/>
    <property type="match status" value="1"/>
</dbReference>
<dbReference type="Pfam" id="PF00573">
    <property type="entry name" value="Ribosomal_L4"/>
    <property type="match status" value="1"/>
</dbReference>
<dbReference type="SUPFAM" id="SSF52166">
    <property type="entry name" value="Ribosomal protein L4"/>
    <property type="match status" value="1"/>
</dbReference>
<name>RL4_CORJK</name>
<proteinExistence type="inferred from homology"/>
<organism>
    <name type="scientific">Corynebacterium jeikeium (strain K411)</name>
    <dbReference type="NCBI Taxonomy" id="306537"/>
    <lineage>
        <taxon>Bacteria</taxon>
        <taxon>Bacillati</taxon>
        <taxon>Actinomycetota</taxon>
        <taxon>Actinomycetes</taxon>
        <taxon>Mycobacteriales</taxon>
        <taxon>Corynebacteriaceae</taxon>
        <taxon>Corynebacterium</taxon>
    </lineage>
</organism>
<keyword id="KW-1185">Reference proteome</keyword>
<keyword id="KW-0687">Ribonucleoprotein</keyword>
<keyword id="KW-0689">Ribosomal protein</keyword>
<keyword id="KW-0694">RNA-binding</keyword>
<keyword id="KW-0699">rRNA-binding</keyword>
<gene>
    <name evidence="1" type="primary">rplD</name>
    <name type="ordered locus">jk1832</name>
</gene>
<reference key="1">
    <citation type="journal article" date="2005" name="J. Bacteriol.">
        <title>Complete genome sequence and analysis of the multiresistant nosocomial pathogen Corynebacterium jeikeium K411, a lipid-requiring bacterium of the human skin flora.</title>
        <authorList>
            <person name="Tauch A."/>
            <person name="Kaiser O."/>
            <person name="Hain T."/>
            <person name="Goesmann A."/>
            <person name="Weisshaar B."/>
            <person name="Albersmeier A."/>
            <person name="Bekel T."/>
            <person name="Bischoff N."/>
            <person name="Brune I."/>
            <person name="Chakraborty T."/>
            <person name="Kalinowski J."/>
            <person name="Meyer F."/>
            <person name="Rupp O."/>
            <person name="Schneiker S."/>
            <person name="Viehoever P."/>
            <person name="Puehler A."/>
        </authorList>
    </citation>
    <scope>NUCLEOTIDE SEQUENCE [LARGE SCALE GENOMIC DNA]</scope>
    <source>
        <strain>K411</strain>
    </source>
</reference>
<accession>Q4JT48</accession>
<protein>
    <recommendedName>
        <fullName evidence="1">Large ribosomal subunit protein uL4</fullName>
    </recommendedName>
    <alternativeName>
        <fullName evidence="3">50S ribosomal protein L4</fullName>
    </alternativeName>
</protein>
<sequence>MSNLKLDVHTADGKTNGTVELPASIFDAEASVALMHQVVTAQLAAKRQGTHATKTRGMVSGGGRKPFRQKGTGRARQGSIRAPHFTGGGTVHGPQPRDYSQRTPKKMKAAALRGALTDRVRHDRIHVVEELVPGQTPSTKAARAFIERLTDRKSVLVVLTREDVTAWKSVNNLPQVHTLVNDQLNTYDVLNADDVVFSVEALNAFINAADKTKEEAK</sequence>
<feature type="chain" id="PRO_0000242363" description="Large ribosomal subunit protein uL4">
    <location>
        <begin position="1"/>
        <end position="217"/>
    </location>
</feature>
<feature type="region of interest" description="Disordered" evidence="2">
    <location>
        <begin position="46"/>
        <end position="103"/>
    </location>
</feature>
<evidence type="ECO:0000255" key="1">
    <source>
        <dbReference type="HAMAP-Rule" id="MF_01328"/>
    </source>
</evidence>
<evidence type="ECO:0000256" key="2">
    <source>
        <dbReference type="SAM" id="MobiDB-lite"/>
    </source>
</evidence>
<evidence type="ECO:0000305" key="3"/>
<comment type="function">
    <text evidence="1">One of the primary rRNA binding proteins, this protein initially binds near the 5'-end of the 23S rRNA. It is important during the early stages of 50S assembly. It makes multiple contacts with different domains of the 23S rRNA in the assembled 50S subunit and ribosome.</text>
</comment>
<comment type="function">
    <text evidence="1">Forms part of the polypeptide exit tunnel.</text>
</comment>
<comment type="subunit">
    <text evidence="1">Part of the 50S ribosomal subunit.</text>
</comment>
<comment type="similarity">
    <text evidence="1">Belongs to the universal ribosomal protein uL4 family.</text>
</comment>